<feature type="signal peptide" evidence="1">
    <location>
        <begin position="1"/>
        <end position="20"/>
    </location>
</feature>
<feature type="chain" id="PRO_0000036302" description="UPF0319 protein YccT">
    <location>
        <begin position="21"/>
        <end position="220"/>
    </location>
</feature>
<proteinExistence type="inferred from homology"/>
<sequence>MKTGALATFLALCLPVTVFATTLRLSNEVDLLVLDGKKVSSSLLRGAESIELENGPHQLVFRVEKTIRLPGNEERLYISPPLVISFDTQLISQVNFQLPRLENEREASHFNAAPRLALLDGDAMPIPVKLDILAITSTAKVVDYEIETERYNKSAKRASLPQFATMMADDSTLLSDVSELDTVPPQSQTLTEQRLKYWFRLADPQTRHHFLQWAEKQPPS</sequence>
<organism>
    <name type="scientific">Salmonella typhi</name>
    <dbReference type="NCBI Taxonomy" id="90370"/>
    <lineage>
        <taxon>Bacteria</taxon>
        <taxon>Pseudomonadati</taxon>
        <taxon>Pseudomonadota</taxon>
        <taxon>Gammaproteobacteria</taxon>
        <taxon>Enterobacterales</taxon>
        <taxon>Enterobacteriaceae</taxon>
        <taxon>Salmonella</taxon>
    </lineage>
</organism>
<gene>
    <name evidence="1" type="primary">yccT</name>
    <name type="ordered locus">STY1099</name>
    <name type="ordered locus">t1843</name>
</gene>
<reference key="1">
    <citation type="journal article" date="2001" name="Nature">
        <title>Complete genome sequence of a multiple drug resistant Salmonella enterica serovar Typhi CT18.</title>
        <authorList>
            <person name="Parkhill J."/>
            <person name="Dougan G."/>
            <person name="James K.D."/>
            <person name="Thomson N.R."/>
            <person name="Pickard D."/>
            <person name="Wain J."/>
            <person name="Churcher C.M."/>
            <person name="Mungall K.L."/>
            <person name="Bentley S.D."/>
            <person name="Holden M.T.G."/>
            <person name="Sebaihia M."/>
            <person name="Baker S."/>
            <person name="Basham D."/>
            <person name="Brooks K."/>
            <person name="Chillingworth T."/>
            <person name="Connerton P."/>
            <person name="Cronin A."/>
            <person name="Davis P."/>
            <person name="Davies R.M."/>
            <person name="Dowd L."/>
            <person name="White N."/>
            <person name="Farrar J."/>
            <person name="Feltwell T."/>
            <person name="Hamlin N."/>
            <person name="Haque A."/>
            <person name="Hien T.T."/>
            <person name="Holroyd S."/>
            <person name="Jagels K."/>
            <person name="Krogh A."/>
            <person name="Larsen T.S."/>
            <person name="Leather S."/>
            <person name="Moule S."/>
            <person name="O'Gaora P."/>
            <person name="Parry C."/>
            <person name="Quail M.A."/>
            <person name="Rutherford K.M."/>
            <person name="Simmonds M."/>
            <person name="Skelton J."/>
            <person name="Stevens K."/>
            <person name="Whitehead S."/>
            <person name="Barrell B.G."/>
        </authorList>
    </citation>
    <scope>NUCLEOTIDE SEQUENCE [LARGE SCALE GENOMIC DNA]</scope>
    <source>
        <strain>CT18</strain>
    </source>
</reference>
<reference key="2">
    <citation type="journal article" date="2003" name="J. Bacteriol.">
        <title>Comparative genomics of Salmonella enterica serovar Typhi strains Ty2 and CT18.</title>
        <authorList>
            <person name="Deng W."/>
            <person name="Liou S.-R."/>
            <person name="Plunkett G. III"/>
            <person name="Mayhew G.F."/>
            <person name="Rose D.J."/>
            <person name="Burland V."/>
            <person name="Kodoyianni V."/>
            <person name="Schwartz D.C."/>
            <person name="Blattner F.R."/>
        </authorList>
    </citation>
    <scope>NUCLEOTIDE SEQUENCE [LARGE SCALE GENOMIC DNA]</scope>
    <source>
        <strain>ATCC 700931 / Ty2</strain>
    </source>
</reference>
<evidence type="ECO:0000255" key="1">
    <source>
        <dbReference type="HAMAP-Rule" id="MF_00789"/>
    </source>
</evidence>
<keyword id="KW-0732">Signal</keyword>
<comment type="similarity">
    <text evidence="1">Belongs to the UPF0319 family.</text>
</comment>
<name>YCCT_SALTI</name>
<protein>
    <recommendedName>
        <fullName evidence="1">UPF0319 protein YccT</fullName>
    </recommendedName>
</protein>
<accession>P62361</accession>
<accession>Q8XEL3</accession>
<dbReference type="EMBL" id="AL513382">
    <property type="protein sequence ID" value="CAD08203.1"/>
    <property type="molecule type" value="Genomic_DNA"/>
</dbReference>
<dbReference type="EMBL" id="AE014613">
    <property type="protein sequence ID" value="AAO69461.1"/>
    <property type="molecule type" value="Genomic_DNA"/>
</dbReference>
<dbReference type="RefSeq" id="NP_455575.1">
    <property type="nucleotide sequence ID" value="NC_003198.1"/>
</dbReference>
<dbReference type="RefSeq" id="WP_000847719.1">
    <property type="nucleotide sequence ID" value="NZ_WSUR01000013.1"/>
</dbReference>
<dbReference type="STRING" id="220341.gene:17585081"/>
<dbReference type="KEGG" id="stt:t1843"/>
<dbReference type="KEGG" id="sty:STY1099"/>
<dbReference type="PATRIC" id="fig|220341.7.peg.1106"/>
<dbReference type="eggNOG" id="COG3110">
    <property type="taxonomic scope" value="Bacteria"/>
</dbReference>
<dbReference type="HOGENOM" id="CLU_073782_2_0_6"/>
<dbReference type="OMA" id="MQIGRDY"/>
<dbReference type="OrthoDB" id="6428208at2"/>
<dbReference type="Proteomes" id="UP000000541">
    <property type="component" value="Chromosome"/>
</dbReference>
<dbReference type="Proteomes" id="UP000002670">
    <property type="component" value="Chromosome"/>
</dbReference>
<dbReference type="HAMAP" id="MF_00789">
    <property type="entry name" value="UPF0319"/>
    <property type="match status" value="1"/>
</dbReference>
<dbReference type="InterPro" id="IPR018635">
    <property type="entry name" value="UPF0319"/>
</dbReference>
<dbReference type="NCBIfam" id="NF047712">
    <property type="entry name" value="CrliSynInhib"/>
    <property type="match status" value="1"/>
</dbReference>
<dbReference type="NCBIfam" id="NF002967">
    <property type="entry name" value="PRK03641.1"/>
    <property type="match status" value="1"/>
</dbReference>
<dbReference type="PANTHER" id="PTHR38108">
    <property type="entry name" value="UPF0319 PROTEIN YCCT"/>
    <property type="match status" value="1"/>
</dbReference>
<dbReference type="PANTHER" id="PTHR38108:SF1">
    <property type="entry name" value="UPF0319 PROTEIN YCCT"/>
    <property type="match status" value="1"/>
</dbReference>
<dbReference type="Pfam" id="PF09829">
    <property type="entry name" value="DUF2057"/>
    <property type="match status" value="1"/>
</dbReference>